<reference key="1">
    <citation type="journal article" date="2002" name="Proc. Natl. Acad. Sci. U.S.A.">
        <title>Genome sequence of a serotype M3 strain of group A Streptococcus: phage-encoded toxins, the high-virulence phenotype, and clone emergence.</title>
        <authorList>
            <person name="Beres S.B."/>
            <person name="Sylva G.L."/>
            <person name="Barbian K.D."/>
            <person name="Lei B."/>
            <person name="Hoff J.S."/>
            <person name="Mammarella N.D."/>
            <person name="Liu M.-Y."/>
            <person name="Smoot J.C."/>
            <person name="Porcella S.F."/>
            <person name="Parkins L.D."/>
            <person name="Campbell D.S."/>
            <person name="Smith T.M."/>
            <person name="McCormick J.K."/>
            <person name="Leung D.Y.M."/>
            <person name="Schlievert P.M."/>
            <person name="Musser J.M."/>
        </authorList>
    </citation>
    <scope>NUCLEOTIDE SEQUENCE [LARGE SCALE GENOMIC DNA]</scope>
    <source>
        <strain>ATCC BAA-595 / MGAS315</strain>
    </source>
</reference>
<comment type="function">
    <text evidence="1">Required for the insertion and/or proper folding and/or complex formation of integral membrane proteins into the membrane. Involved in integration of membrane proteins that insert both dependently and independently of the Sec translocase complex, as well as at least some lipoproteins.</text>
</comment>
<comment type="subcellular location">
    <subcellularLocation>
        <location evidence="1">Cell membrane</location>
        <topology evidence="1">Multi-pass membrane protein</topology>
    </subcellularLocation>
</comment>
<comment type="similarity">
    <text evidence="1">Belongs to the OXA1/ALB3/YidC family. Type 2 subfamily.</text>
</comment>
<dbReference type="EMBL" id="AE014074">
    <property type="protein sequence ID" value="AAM78783.1"/>
    <property type="molecule type" value="Genomic_DNA"/>
</dbReference>
<dbReference type="RefSeq" id="WP_010921871.1">
    <property type="nucleotide sequence ID" value="NC_004070.1"/>
</dbReference>
<dbReference type="SMR" id="P0DC86"/>
<dbReference type="KEGG" id="spg:SpyM3_0176"/>
<dbReference type="HOGENOM" id="CLU_036138_5_0_9"/>
<dbReference type="Proteomes" id="UP000000564">
    <property type="component" value="Chromosome"/>
</dbReference>
<dbReference type="GO" id="GO:0005886">
    <property type="term" value="C:plasma membrane"/>
    <property type="evidence" value="ECO:0007669"/>
    <property type="project" value="UniProtKB-SubCell"/>
</dbReference>
<dbReference type="GO" id="GO:0032977">
    <property type="term" value="F:membrane insertase activity"/>
    <property type="evidence" value="ECO:0007669"/>
    <property type="project" value="InterPro"/>
</dbReference>
<dbReference type="GO" id="GO:0051205">
    <property type="term" value="P:protein insertion into membrane"/>
    <property type="evidence" value="ECO:0007669"/>
    <property type="project" value="TreeGrafter"/>
</dbReference>
<dbReference type="GO" id="GO:0015031">
    <property type="term" value="P:protein transport"/>
    <property type="evidence" value="ECO:0007669"/>
    <property type="project" value="UniProtKB-KW"/>
</dbReference>
<dbReference type="CDD" id="cd20070">
    <property type="entry name" value="5TM_YidC_Alb3"/>
    <property type="match status" value="1"/>
</dbReference>
<dbReference type="HAMAP" id="MF_01811">
    <property type="entry name" value="YidC_type2"/>
    <property type="match status" value="1"/>
</dbReference>
<dbReference type="InterPro" id="IPR001708">
    <property type="entry name" value="YidC/ALB3/OXA1/COX18"/>
</dbReference>
<dbReference type="InterPro" id="IPR028055">
    <property type="entry name" value="YidC/Oxa/ALB_C"/>
</dbReference>
<dbReference type="InterPro" id="IPR023060">
    <property type="entry name" value="YidC/YidC1/YidC2_Firmicutes"/>
</dbReference>
<dbReference type="InterPro" id="IPR047196">
    <property type="entry name" value="YidC_ALB_C"/>
</dbReference>
<dbReference type="NCBIfam" id="TIGR03592">
    <property type="entry name" value="yidC_oxa1_cterm"/>
    <property type="match status" value="1"/>
</dbReference>
<dbReference type="PANTHER" id="PTHR12428:SF65">
    <property type="entry name" value="CYTOCHROME C OXIDASE ASSEMBLY PROTEIN COX18, MITOCHONDRIAL"/>
    <property type="match status" value="1"/>
</dbReference>
<dbReference type="PANTHER" id="PTHR12428">
    <property type="entry name" value="OXA1"/>
    <property type="match status" value="1"/>
</dbReference>
<dbReference type="Pfam" id="PF02096">
    <property type="entry name" value="60KD_IMP"/>
    <property type="match status" value="1"/>
</dbReference>
<dbReference type="PRINTS" id="PR00701">
    <property type="entry name" value="60KDINNERMP"/>
</dbReference>
<dbReference type="PROSITE" id="PS51257">
    <property type="entry name" value="PROKAR_LIPOPROTEIN"/>
    <property type="match status" value="1"/>
</dbReference>
<organism>
    <name type="scientific">Streptococcus pyogenes serotype M3 (strain ATCC BAA-595 / MGAS315)</name>
    <dbReference type="NCBI Taxonomy" id="198466"/>
    <lineage>
        <taxon>Bacteria</taxon>
        <taxon>Bacillati</taxon>
        <taxon>Bacillota</taxon>
        <taxon>Bacilli</taxon>
        <taxon>Lactobacillales</taxon>
        <taxon>Streptococcaceae</taxon>
        <taxon>Streptococcus</taxon>
    </lineage>
</organism>
<keyword id="KW-1003">Cell membrane</keyword>
<keyword id="KW-0143">Chaperone</keyword>
<keyword id="KW-0449">Lipoprotein</keyword>
<keyword id="KW-0472">Membrane</keyword>
<keyword id="KW-0564">Palmitate</keyword>
<keyword id="KW-0653">Protein transport</keyword>
<keyword id="KW-0732">Signal</keyword>
<keyword id="KW-0812">Transmembrane</keyword>
<keyword id="KW-1133">Transmembrane helix</keyword>
<keyword id="KW-0813">Transport</keyword>
<gene>
    <name evidence="1" type="primary">yidC1</name>
    <name type="ordered locus">SpyM3_0176</name>
</gene>
<name>YIDC1_STRP3</name>
<feature type="signal peptide" evidence="1">
    <location>
        <begin position="1"/>
        <end position="25"/>
    </location>
</feature>
<feature type="chain" id="PRO_0000020412" description="Membrane protein insertase YidC 1">
    <location>
        <begin position="26"/>
        <end position="275"/>
    </location>
</feature>
<feature type="transmembrane region" description="Helical" evidence="1">
    <location>
        <begin position="58"/>
        <end position="78"/>
    </location>
</feature>
<feature type="transmembrane region" description="Helical" evidence="1">
    <location>
        <begin position="129"/>
        <end position="149"/>
    </location>
</feature>
<feature type="transmembrane region" description="Helical" evidence="1">
    <location>
        <begin position="171"/>
        <end position="191"/>
    </location>
</feature>
<feature type="transmembrane region" description="Helical" evidence="1">
    <location>
        <begin position="198"/>
        <end position="216"/>
    </location>
</feature>
<feature type="transmembrane region" description="Helical" evidence="1">
    <location>
        <begin position="222"/>
        <end position="240"/>
    </location>
</feature>
<feature type="lipid moiety-binding region" description="N-palmitoyl cysteine" evidence="1">
    <location>
        <position position="26"/>
    </location>
</feature>
<feature type="lipid moiety-binding region" description="S-diacylglycerol cysteine" evidence="1">
    <location>
        <position position="26"/>
    </location>
</feature>
<evidence type="ECO:0000255" key="1">
    <source>
        <dbReference type="HAMAP-Rule" id="MF_01811"/>
    </source>
</evidence>
<accession>P0DC86</accession>
<accession>P65632</accession>
<accession>Q9A1J3</accession>
<proteinExistence type="inferred from homology"/>
<protein>
    <recommendedName>
        <fullName evidence="1">Membrane protein insertase YidC 1</fullName>
    </recommendedName>
    <alternativeName>
        <fullName evidence="1">Foldase YidC 1</fullName>
    </alternativeName>
    <alternativeName>
        <fullName evidence="1">Membrane integrase YidC 1</fullName>
    </alternativeName>
    <alternativeName>
        <fullName evidence="1">Membrane protein YidC 1</fullName>
    </alternativeName>
</protein>
<sequence>MRKVLRVKKNIKIARIVPLVLLLVACGRGEVTAQSSSGWDQLVYLFARAIQWLSFDGSIGVGIILFTLTIRLMLMPLFNMQIKSSQKMQDIQPELRELQRKYAGKDTQTRMKLAEESQALYKKYGVNPYASLLPLLIQMPVMIALFQALTRVSFLKTGTFLWVELAQHDHLYLLPVLAAVFTFLSTWLTNLAAKEKNVMMTVMIYVMPLMIFFMGFNLASGVVLYWTVSNAFQVVQLLLLNNPFKIIAERQRLANEEKERRLRERRARKKAMKRK</sequence>